<protein>
    <recommendedName>
        <fullName>UPF0457 protein BCE33L2265</fullName>
    </recommendedName>
</protein>
<dbReference type="EMBL" id="CP000001">
    <property type="protein sequence ID" value="AAU17993.1"/>
    <property type="molecule type" value="Genomic_DNA"/>
</dbReference>
<dbReference type="RefSeq" id="WP_000900585.1">
    <property type="nucleotide sequence ID" value="NC_006274.1"/>
</dbReference>
<dbReference type="KEGG" id="bcz:BCE33L2265"/>
<dbReference type="PATRIC" id="fig|288681.22.peg.3233"/>
<dbReference type="Proteomes" id="UP000002612">
    <property type="component" value="Chromosome"/>
</dbReference>
<dbReference type="InterPro" id="IPR055365">
    <property type="entry name" value="PH_SunI-like"/>
</dbReference>
<dbReference type="Pfam" id="PF23491">
    <property type="entry name" value="bPH_8"/>
    <property type="match status" value="1"/>
</dbReference>
<accession>Q63B62</accession>
<feature type="chain" id="PRO_0000294491" description="UPF0457 protein BCE33L2265">
    <location>
        <begin position="1"/>
        <end position="86"/>
    </location>
</feature>
<evidence type="ECO:0000305" key="1"/>
<gene>
    <name type="ordered locus">BCE33L2265</name>
</gene>
<organism>
    <name type="scientific">Bacillus cereus (strain ZK / E33L)</name>
    <dbReference type="NCBI Taxonomy" id="288681"/>
    <lineage>
        <taxon>Bacteria</taxon>
        <taxon>Bacillati</taxon>
        <taxon>Bacillota</taxon>
        <taxon>Bacilli</taxon>
        <taxon>Bacillales</taxon>
        <taxon>Bacillaceae</taxon>
        <taxon>Bacillus</taxon>
        <taxon>Bacillus cereus group</taxon>
    </lineage>
</organism>
<name>Y2265_BACCZ</name>
<reference key="1">
    <citation type="journal article" date="2006" name="J. Bacteriol.">
        <title>Pathogenomic sequence analysis of Bacillus cereus and Bacillus thuringiensis isolates closely related to Bacillus anthracis.</title>
        <authorList>
            <person name="Han C.S."/>
            <person name="Xie G."/>
            <person name="Challacombe J.F."/>
            <person name="Altherr M.R."/>
            <person name="Bhotika S.S."/>
            <person name="Bruce D."/>
            <person name="Campbell C.S."/>
            <person name="Campbell M.L."/>
            <person name="Chen J."/>
            <person name="Chertkov O."/>
            <person name="Cleland C."/>
            <person name="Dimitrijevic M."/>
            <person name="Doggett N.A."/>
            <person name="Fawcett J.J."/>
            <person name="Glavina T."/>
            <person name="Goodwin L.A."/>
            <person name="Hill K.K."/>
            <person name="Hitchcock P."/>
            <person name="Jackson P.J."/>
            <person name="Keim P."/>
            <person name="Kewalramani A.R."/>
            <person name="Longmire J."/>
            <person name="Lucas S."/>
            <person name="Malfatti S."/>
            <person name="McMurry K."/>
            <person name="Meincke L.J."/>
            <person name="Misra M."/>
            <person name="Moseman B.L."/>
            <person name="Mundt M."/>
            <person name="Munk A.C."/>
            <person name="Okinaka R.T."/>
            <person name="Parson-Quintana B."/>
            <person name="Reilly L.P."/>
            <person name="Richardson P."/>
            <person name="Robinson D.L."/>
            <person name="Rubin E."/>
            <person name="Saunders E."/>
            <person name="Tapia R."/>
            <person name="Tesmer J.G."/>
            <person name="Thayer N."/>
            <person name="Thompson L.S."/>
            <person name="Tice H."/>
            <person name="Ticknor L.O."/>
            <person name="Wills P.L."/>
            <person name="Brettin T.S."/>
            <person name="Gilna P."/>
        </authorList>
    </citation>
    <scope>NUCLEOTIDE SEQUENCE [LARGE SCALE GENOMIC DNA]</scope>
    <source>
        <strain>ZK / E33L</strain>
    </source>
</reference>
<comment type="similarity">
    <text evidence="1">Belongs to the UPF0457 family.</text>
</comment>
<sequence>MLGIDVKKTKEELIISWQLAEITIPLRDVIEVTEDATYAGVEETSAIRIGTAYGTTDRILIKTVKQNYVLFTTNKVSILNAINAKN</sequence>
<proteinExistence type="inferred from homology"/>